<organism>
    <name type="scientific">Escherichia coli (strain K12)</name>
    <dbReference type="NCBI Taxonomy" id="83333"/>
    <lineage>
        <taxon>Bacteria</taxon>
        <taxon>Pseudomonadati</taxon>
        <taxon>Pseudomonadota</taxon>
        <taxon>Gammaproteobacteria</taxon>
        <taxon>Enterobacterales</taxon>
        <taxon>Enterobacteriaceae</taxon>
        <taxon>Escherichia</taxon>
    </lineage>
</organism>
<sequence length="105" mass="11465">MKKIAAISLISIFIMSGCAVHNDETSIGKFGLAYKSNIQRKLDNQYYTEAEASLARGRISGAENIVKNDATHFCVTQGKKMQIVELKTEGVGLHGVARLTFKCGE</sequence>
<reference key="1">
    <citation type="journal article" date="1997" name="Science">
        <title>The complete genome sequence of Escherichia coli K-12.</title>
        <authorList>
            <person name="Blattner F.R."/>
            <person name="Plunkett G. III"/>
            <person name="Bloch C.A."/>
            <person name="Perna N.T."/>
            <person name="Burland V."/>
            <person name="Riley M."/>
            <person name="Collado-Vides J."/>
            <person name="Glasner J.D."/>
            <person name="Rode C.K."/>
            <person name="Mayhew G.F."/>
            <person name="Gregor J."/>
            <person name="Davis N.W."/>
            <person name="Kirkpatrick H.A."/>
            <person name="Goeden M.A."/>
            <person name="Rose D.J."/>
            <person name="Mau B."/>
            <person name="Shao Y."/>
        </authorList>
    </citation>
    <scope>NUCLEOTIDE SEQUENCE [LARGE SCALE GENOMIC DNA]</scope>
    <source>
        <strain>K12 / MG1655 / ATCC 47076</strain>
    </source>
</reference>
<reference key="2">
    <citation type="journal article" date="2006" name="Mol. Syst. Biol.">
        <title>Highly accurate genome sequences of Escherichia coli K-12 strains MG1655 and W3110.</title>
        <authorList>
            <person name="Hayashi K."/>
            <person name="Morooka N."/>
            <person name="Yamamoto Y."/>
            <person name="Fujita K."/>
            <person name="Isono K."/>
            <person name="Choi S."/>
            <person name="Ohtsubo E."/>
            <person name="Baba T."/>
            <person name="Wanner B.L."/>
            <person name="Mori H."/>
            <person name="Horiuchi T."/>
        </authorList>
    </citation>
    <scope>NUCLEOTIDE SEQUENCE [LARGE SCALE GENOMIC DNA]</scope>
    <source>
        <strain>K12 / W3110 / ATCC 27325 / DSM 5911</strain>
    </source>
</reference>
<protein>
    <recommendedName>
        <fullName>Uncharacterized protein YegR</fullName>
    </recommendedName>
</protein>
<feature type="chain" id="PRO_0000169128" description="Uncharacterized protein YegR">
    <location>
        <begin position="1"/>
        <end position="105"/>
    </location>
</feature>
<keyword id="KW-1185">Reference proteome</keyword>
<dbReference type="EMBL" id="U00096">
    <property type="protein sequence ID" value="AAC75146.2"/>
    <property type="molecule type" value="Genomic_DNA"/>
</dbReference>
<dbReference type="EMBL" id="AP009048">
    <property type="protein sequence ID" value="BAE76582.1"/>
    <property type="molecule type" value="Genomic_DNA"/>
</dbReference>
<dbReference type="PIR" id="D64975">
    <property type="entry name" value="D64975"/>
</dbReference>
<dbReference type="RefSeq" id="NP_416589.2">
    <property type="nucleotide sequence ID" value="NC_000913.3"/>
</dbReference>
<dbReference type="RefSeq" id="WP_001318299.1">
    <property type="nucleotide sequence ID" value="NZ_SSZK01000011.1"/>
</dbReference>
<dbReference type="BioGRID" id="4261757">
    <property type="interactions" value="3"/>
</dbReference>
<dbReference type="FunCoup" id="P76406">
    <property type="interactions" value="66"/>
</dbReference>
<dbReference type="STRING" id="511145.b2085"/>
<dbReference type="jPOST" id="P76406"/>
<dbReference type="PaxDb" id="511145-b2085"/>
<dbReference type="EnsemblBacteria" id="AAC75146">
    <property type="protein sequence ID" value="AAC75146"/>
    <property type="gene ID" value="b2085"/>
</dbReference>
<dbReference type="GeneID" id="946613"/>
<dbReference type="KEGG" id="ecj:JW5837"/>
<dbReference type="KEGG" id="eco:b2085"/>
<dbReference type="PATRIC" id="fig|511145.12.peg.2162"/>
<dbReference type="EchoBASE" id="EB3814"/>
<dbReference type="eggNOG" id="ENOG50331H8">
    <property type="taxonomic scope" value="Bacteria"/>
</dbReference>
<dbReference type="HOGENOM" id="CLU_152461_0_0_6"/>
<dbReference type="InParanoid" id="P76406"/>
<dbReference type="OMA" id="NTRACRW"/>
<dbReference type="BioCyc" id="EcoCyc:G7122-MONOMER"/>
<dbReference type="PRO" id="PR:P76406"/>
<dbReference type="Proteomes" id="UP000000625">
    <property type="component" value="Chromosome"/>
</dbReference>
<dbReference type="PROSITE" id="PS51257">
    <property type="entry name" value="PROKAR_LIPOPROTEIN"/>
    <property type="match status" value="1"/>
</dbReference>
<accession>P76406</accession>
<accession>Q2MAX4</accession>
<gene>
    <name type="primary">yegR</name>
    <name type="ordered locus">b2085</name>
    <name type="ordered locus">JW5837</name>
</gene>
<name>YEGR_ECOLI</name>
<proteinExistence type="predicted"/>